<name>RL16_NOSS1</name>
<accession>Q8YPI6</accession>
<proteinExistence type="inferred from homology"/>
<keyword id="KW-1185">Reference proteome</keyword>
<keyword id="KW-0687">Ribonucleoprotein</keyword>
<keyword id="KW-0689">Ribosomal protein</keyword>
<keyword id="KW-0694">RNA-binding</keyword>
<keyword id="KW-0699">rRNA-binding</keyword>
<keyword id="KW-0820">tRNA-binding</keyword>
<organism>
    <name type="scientific">Nostoc sp. (strain PCC 7120 / SAG 25.82 / UTEX 2576)</name>
    <dbReference type="NCBI Taxonomy" id="103690"/>
    <lineage>
        <taxon>Bacteria</taxon>
        <taxon>Bacillati</taxon>
        <taxon>Cyanobacteriota</taxon>
        <taxon>Cyanophyceae</taxon>
        <taxon>Nostocales</taxon>
        <taxon>Nostocaceae</taxon>
        <taxon>Nostoc</taxon>
    </lineage>
</organism>
<gene>
    <name evidence="1" type="primary">rplP</name>
    <name evidence="1" type="synonym">rpl16</name>
    <name type="ordered locus">all4208</name>
</gene>
<sequence length="142" mass="16301">MLSPRRTKFRKQQRGRMGGLAHRGSTLNFGDFALQAQEPAWITSRQIEASRRAMTRYIRRGGKIWIRIFPDKPVTMRPAETRMGSGKGNPEFWVAVVKPGRILFEIAGVTEEIAREAMRLAAYKLPIKTKFIVRSQVVEEQE</sequence>
<feature type="chain" id="PRO_0000062030" description="Large ribosomal subunit protein uL16">
    <location>
        <begin position="1"/>
        <end position="142"/>
    </location>
</feature>
<comment type="function">
    <text evidence="1">Binds 23S rRNA and is also seen to make contacts with the A and possibly P site tRNAs.</text>
</comment>
<comment type="subunit">
    <text evidence="1">Part of the 50S ribosomal subunit.</text>
</comment>
<comment type="similarity">
    <text evidence="1">Belongs to the universal ribosomal protein uL16 family.</text>
</comment>
<reference key="1">
    <citation type="journal article" date="2001" name="DNA Res.">
        <title>Complete genomic sequence of the filamentous nitrogen-fixing cyanobacterium Anabaena sp. strain PCC 7120.</title>
        <authorList>
            <person name="Kaneko T."/>
            <person name="Nakamura Y."/>
            <person name="Wolk C.P."/>
            <person name="Kuritz T."/>
            <person name="Sasamoto S."/>
            <person name="Watanabe A."/>
            <person name="Iriguchi M."/>
            <person name="Ishikawa A."/>
            <person name="Kawashima K."/>
            <person name="Kimura T."/>
            <person name="Kishida Y."/>
            <person name="Kohara M."/>
            <person name="Matsumoto M."/>
            <person name="Matsuno A."/>
            <person name="Muraki A."/>
            <person name="Nakazaki N."/>
            <person name="Shimpo S."/>
            <person name="Sugimoto M."/>
            <person name="Takazawa M."/>
            <person name="Yamada M."/>
            <person name="Yasuda M."/>
            <person name="Tabata S."/>
        </authorList>
    </citation>
    <scope>NUCLEOTIDE SEQUENCE [LARGE SCALE GENOMIC DNA]</scope>
    <source>
        <strain>PCC 7120 / SAG 25.82 / UTEX 2576</strain>
    </source>
</reference>
<dbReference type="EMBL" id="BA000019">
    <property type="protein sequence ID" value="BAB75907.1"/>
    <property type="molecule type" value="Genomic_DNA"/>
</dbReference>
<dbReference type="PIR" id="AI2331">
    <property type="entry name" value="AI2331"/>
</dbReference>
<dbReference type="RefSeq" id="WP_010998346.1">
    <property type="nucleotide sequence ID" value="NZ_RSCN01000010.1"/>
</dbReference>
<dbReference type="SMR" id="Q8YPI6"/>
<dbReference type="STRING" id="103690.gene:10496257"/>
<dbReference type="GeneID" id="58723356"/>
<dbReference type="KEGG" id="ana:all4208"/>
<dbReference type="eggNOG" id="COG0197">
    <property type="taxonomic scope" value="Bacteria"/>
</dbReference>
<dbReference type="OrthoDB" id="9802589at2"/>
<dbReference type="Proteomes" id="UP000002483">
    <property type="component" value="Chromosome"/>
</dbReference>
<dbReference type="GO" id="GO:0022625">
    <property type="term" value="C:cytosolic large ribosomal subunit"/>
    <property type="evidence" value="ECO:0007669"/>
    <property type="project" value="TreeGrafter"/>
</dbReference>
<dbReference type="GO" id="GO:0019843">
    <property type="term" value="F:rRNA binding"/>
    <property type="evidence" value="ECO:0007669"/>
    <property type="project" value="UniProtKB-UniRule"/>
</dbReference>
<dbReference type="GO" id="GO:0003735">
    <property type="term" value="F:structural constituent of ribosome"/>
    <property type="evidence" value="ECO:0007669"/>
    <property type="project" value="InterPro"/>
</dbReference>
<dbReference type="GO" id="GO:0000049">
    <property type="term" value="F:tRNA binding"/>
    <property type="evidence" value="ECO:0007669"/>
    <property type="project" value="UniProtKB-KW"/>
</dbReference>
<dbReference type="GO" id="GO:0006412">
    <property type="term" value="P:translation"/>
    <property type="evidence" value="ECO:0007669"/>
    <property type="project" value="UniProtKB-UniRule"/>
</dbReference>
<dbReference type="CDD" id="cd01433">
    <property type="entry name" value="Ribosomal_L16_L10e"/>
    <property type="match status" value="1"/>
</dbReference>
<dbReference type="FunFam" id="3.90.1170.10:FF:000001">
    <property type="entry name" value="50S ribosomal protein L16"/>
    <property type="match status" value="1"/>
</dbReference>
<dbReference type="Gene3D" id="3.90.1170.10">
    <property type="entry name" value="Ribosomal protein L10e/L16"/>
    <property type="match status" value="1"/>
</dbReference>
<dbReference type="HAMAP" id="MF_01342">
    <property type="entry name" value="Ribosomal_uL16"/>
    <property type="match status" value="1"/>
</dbReference>
<dbReference type="InterPro" id="IPR047873">
    <property type="entry name" value="Ribosomal_uL16"/>
</dbReference>
<dbReference type="InterPro" id="IPR000114">
    <property type="entry name" value="Ribosomal_uL16_bact-type"/>
</dbReference>
<dbReference type="InterPro" id="IPR020798">
    <property type="entry name" value="Ribosomal_uL16_CS"/>
</dbReference>
<dbReference type="InterPro" id="IPR016180">
    <property type="entry name" value="Ribosomal_uL16_dom"/>
</dbReference>
<dbReference type="InterPro" id="IPR036920">
    <property type="entry name" value="Ribosomal_uL16_sf"/>
</dbReference>
<dbReference type="NCBIfam" id="TIGR01164">
    <property type="entry name" value="rplP_bact"/>
    <property type="match status" value="1"/>
</dbReference>
<dbReference type="PANTHER" id="PTHR12220">
    <property type="entry name" value="50S/60S RIBOSOMAL PROTEIN L16"/>
    <property type="match status" value="1"/>
</dbReference>
<dbReference type="PANTHER" id="PTHR12220:SF13">
    <property type="entry name" value="LARGE RIBOSOMAL SUBUNIT PROTEIN UL16M"/>
    <property type="match status" value="1"/>
</dbReference>
<dbReference type="Pfam" id="PF00252">
    <property type="entry name" value="Ribosomal_L16"/>
    <property type="match status" value="1"/>
</dbReference>
<dbReference type="PRINTS" id="PR00060">
    <property type="entry name" value="RIBOSOMALL16"/>
</dbReference>
<dbReference type="SUPFAM" id="SSF54686">
    <property type="entry name" value="Ribosomal protein L16p/L10e"/>
    <property type="match status" value="1"/>
</dbReference>
<dbReference type="PROSITE" id="PS00586">
    <property type="entry name" value="RIBOSOMAL_L16_1"/>
    <property type="match status" value="1"/>
</dbReference>
<dbReference type="PROSITE" id="PS00701">
    <property type="entry name" value="RIBOSOMAL_L16_2"/>
    <property type="match status" value="1"/>
</dbReference>
<protein>
    <recommendedName>
        <fullName evidence="1">Large ribosomal subunit protein uL16</fullName>
    </recommendedName>
    <alternativeName>
        <fullName evidence="2">50S ribosomal protein L16</fullName>
    </alternativeName>
</protein>
<evidence type="ECO:0000255" key="1">
    <source>
        <dbReference type="HAMAP-Rule" id="MF_01342"/>
    </source>
</evidence>
<evidence type="ECO:0000305" key="2"/>